<name>KGUA_BORBR</name>
<proteinExistence type="inferred from homology"/>
<comment type="function">
    <text evidence="1">Essential for recycling GMP and indirectly, cGMP.</text>
</comment>
<comment type="catalytic activity">
    <reaction evidence="1">
        <text>GMP + ATP = GDP + ADP</text>
        <dbReference type="Rhea" id="RHEA:20780"/>
        <dbReference type="ChEBI" id="CHEBI:30616"/>
        <dbReference type="ChEBI" id="CHEBI:58115"/>
        <dbReference type="ChEBI" id="CHEBI:58189"/>
        <dbReference type="ChEBI" id="CHEBI:456216"/>
        <dbReference type="EC" id="2.7.4.8"/>
    </reaction>
</comment>
<comment type="subcellular location">
    <subcellularLocation>
        <location evidence="1">Cytoplasm</location>
    </subcellularLocation>
</comment>
<comment type="similarity">
    <text evidence="1">Belongs to the guanylate kinase family.</text>
</comment>
<dbReference type="EC" id="2.7.4.8" evidence="1"/>
<dbReference type="EMBL" id="BX640446">
    <property type="protein sequence ID" value="CAE33463.1"/>
    <property type="molecule type" value="Genomic_DNA"/>
</dbReference>
<dbReference type="SMR" id="Q7WI80"/>
<dbReference type="KEGG" id="bbr:BB2971"/>
<dbReference type="eggNOG" id="COG0194">
    <property type="taxonomic scope" value="Bacteria"/>
</dbReference>
<dbReference type="HOGENOM" id="CLU_001715_1_0_4"/>
<dbReference type="Proteomes" id="UP000001027">
    <property type="component" value="Chromosome"/>
</dbReference>
<dbReference type="GO" id="GO:0005829">
    <property type="term" value="C:cytosol"/>
    <property type="evidence" value="ECO:0007669"/>
    <property type="project" value="TreeGrafter"/>
</dbReference>
<dbReference type="GO" id="GO:0005524">
    <property type="term" value="F:ATP binding"/>
    <property type="evidence" value="ECO:0007669"/>
    <property type="project" value="UniProtKB-UniRule"/>
</dbReference>
<dbReference type="GO" id="GO:0004385">
    <property type="term" value="F:guanylate kinase activity"/>
    <property type="evidence" value="ECO:0007669"/>
    <property type="project" value="UniProtKB-UniRule"/>
</dbReference>
<dbReference type="CDD" id="cd00071">
    <property type="entry name" value="GMPK"/>
    <property type="match status" value="1"/>
</dbReference>
<dbReference type="FunFam" id="3.30.63.10:FF:000005">
    <property type="entry name" value="Guanylate kinase"/>
    <property type="match status" value="1"/>
</dbReference>
<dbReference type="Gene3D" id="3.30.63.10">
    <property type="entry name" value="Guanylate Kinase phosphate binding domain"/>
    <property type="match status" value="1"/>
</dbReference>
<dbReference type="Gene3D" id="3.40.50.300">
    <property type="entry name" value="P-loop containing nucleotide triphosphate hydrolases"/>
    <property type="match status" value="1"/>
</dbReference>
<dbReference type="HAMAP" id="MF_00328">
    <property type="entry name" value="Guanylate_kinase"/>
    <property type="match status" value="1"/>
</dbReference>
<dbReference type="InterPro" id="IPR008145">
    <property type="entry name" value="GK/Ca_channel_bsu"/>
</dbReference>
<dbReference type="InterPro" id="IPR008144">
    <property type="entry name" value="Guanylate_kin-like_dom"/>
</dbReference>
<dbReference type="InterPro" id="IPR017665">
    <property type="entry name" value="Guanylate_kinase"/>
</dbReference>
<dbReference type="InterPro" id="IPR020590">
    <property type="entry name" value="Guanylate_kinase_CS"/>
</dbReference>
<dbReference type="InterPro" id="IPR027417">
    <property type="entry name" value="P-loop_NTPase"/>
</dbReference>
<dbReference type="NCBIfam" id="TIGR03263">
    <property type="entry name" value="guanyl_kin"/>
    <property type="match status" value="1"/>
</dbReference>
<dbReference type="PANTHER" id="PTHR23117:SF13">
    <property type="entry name" value="GUANYLATE KINASE"/>
    <property type="match status" value="1"/>
</dbReference>
<dbReference type="PANTHER" id="PTHR23117">
    <property type="entry name" value="GUANYLATE KINASE-RELATED"/>
    <property type="match status" value="1"/>
</dbReference>
<dbReference type="Pfam" id="PF00625">
    <property type="entry name" value="Guanylate_kin"/>
    <property type="match status" value="1"/>
</dbReference>
<dbReference type="SMART" id="SM00072">
    <property type="entry name" value="GuKc"/>
    <property type="match status" value="1"/>
</dbReference>
<dbReference type="SUPFAM" id="SSF52540">
    <property type="entry name" value="P-loop containing nucleoside triphosphate hydrolases"/>
    <property type="match status" value="1"/>
</dbReference>
<dbReference type="PROSITE" id="PS00856">
    <property type="entry name" value="GUANYLATE_KINASE_1"/>
    <property type="match status" value="1"/>
</dbReference>
<dbReference type="PROSITE" id="PS50052">
    <property type="entry name" value="GUANYLATE_KINASE_2"/>
    <property type="match status" value="1"/>
</dbReference>
<accession>Q7WI80</accession>
<evidence type="ECO:0000255" key="1">
    <source>
        <dbReference type="HAMAP-Rule" id="MF_00328"/>
    </source>
</evidence>
<reference key="1">
    <citation type="journal article" date="2003" name="Nat. Genet.">
        <title>Comparative analysis of the genome sequences of Bordetella pertussis, Bordetella parapertussis and Bordetella bronchiseptica.</title>
        <authorList>
            <person name="Parkhill J."/>
            <person name="Sebaihia M."/>
            <person name="Preston A."/>
            <person name="Murphy L.D."/>
            <person name="Thomson N.R."/>
            <person name="Harris D.E."/>
            <person name="Holden M.T.G."/>
            <person name="Churcher C.M."/>
            <person name="Bentley S.D."/>
            <person name="Mungall K.L."/>
            <person name="Cerdeno-Tarraga A.-M."/>
            <person name="Temple L."/>
            <person name="James K.D."/>
            <person name="Harris B."/>
            <person name="Quail M.A."/>
            <person name="Achtman M."/>
            <person name="Atkin R."/>
            <person name="Baker S."/>
            <person name="Basham D."/>
            <person name="Bason N."/>
            <person name="Cherevach I."/>
            <person name="Chillingworth T."/>
            <person name="Collins M."/>
            <person name="Cronin A."/>
            <person name="Davis P."/>
            <person name="Doggett J."/>
            <person name="Feltwell T."/>
            <person name="Goble A."/>
            <person name="Hamlin N."/>
            <person name="Hauser H."/>
            <person name="Holroyd S."/>
            <person name="Jagels K."/>
            <person name="Leather S."/>
            <person name="Moule S."/>
            <person name="Norberczak H."/>
            <person name="O'Neil S."/>
            <person name="Ormond D."/>
            <person name="Price C."/>
            <person name="Rabbinowitsch E."/>
            <person name="Rutter S."/>
            <person name="Sanders M."/>
            <person name="Saunders D."/>
            <person name="Seeger K."/>
            <person name="Sharp S."/>
            <person name="Simmonds M."/>
            <person name="Skelton J."/>
            <person name="Squares R."/>
            <person name="Squares S."/>
            <person name="Stevens K."/>
            <person name="Unwin L."/>
            <person name="Whitehead S."/>
            <person name="Barrell B.G."/>
            <person name="Maskell D.J."/>
        </authorList>
    </citation>
    <scope>NUCLEOTIDE SEQUENCE [LARGE SCALE GENOMIC DNA]</scope>
    <source>
        <strain>ATCC BAA-588 / NCTC 13252 / RB50</strain>
    </source>
</reference>
<keyword id="KW-0067">ATP-binding</keyword>
<keyword id="KW-0963">Cytoplasm</keyword>
<keyword id="KW-0418">Kinase</keyword>
<keyword id="KW-0547">Nucleotide-binding</keyword>
<keyword id="KW-0808">Transferase</keyword>
<protein>
    <recommendedName>
        <fullName evidence="1">Guanylate kinase</fullName>
        <ecNumber evidence="1">2.7.4.8</ecNumber>
    </recommendedName>
    <alternativeName>
        <fullName evidence="1">GMP kinase</fullName>
    </alternativeName>
</protein>
<feature type="chain" id="PRO_0000170504" description="Guanylate kinase">
    <location>
        <begin position="1"/>
        <end position="215"/>
    </location>
</feature>
<feature type="domain" description="Guanylate kinase-like" evidence="1">
    <location>
        <begin position="11"/>
        <end position="189"/>
    </location>
</feature>
<feature type="binding site" evidence="1">
    <location>
        <begin position="18"/>
        <end position="25"/>
    </location>
    <ligand>
        <name>ATP</name>
        <dbReference type="ChEBI" id="CHEBI:30616"/>
    </ligand>
</feature>
<organism>
    <name type="scientific">Bordetella bronchiseptica (strain ATCC BAA-588 / NCTC 13252 / RB50)</name>
    <name type="common">Alcaligenes bronchisepticus</name>
    <dbReference type="NCBI Taxonomy" id="257310"/>
    <lineage>
        <taxon>Bacteria</taxon>
        <taxon>Pseudomonadati</taxon>
        <taxon>Pseudomonadota</taxon>
        <taxon>Betaproteobacteria</taxon>
        <taxon>Burkholderiales</taxon>
        <taxon>Alcaligenaceae</taxon>
        <taxon>Bordetella</taxon>
    </lineage>
</organism>
<sequence length="215" mass="23681">MSFLSMSAPSGNVFMVVAPSGAGKSSLVRALLDRDPSLVLSISCTTRAPRPGEQDGREYRFVDQAEFARLRDAQQLLEWAEVHGNFYGTPRDRIDEATRAGHDVLLEIDWQGARQVKQRYPEAIGIFVLPPSIDELESRLKARGQDAPQVIARRLLAAGGEIAHAPECEYVIINQEFSVALTELVQIISAARLRFSSQAVRNAQLFSQLGIPAAH</sequence>
<gene>
    <name evidence="1" type="primary">gmk</name>
    <name type="ordered locus">BB2971</name>
</gene>